<dbReference type="EMBL" id="AP009369">
    <property type="protein sequence ID" value="BAF50056.1"/>
    <property type="molecule type" value="Genomic_DNA"/>
</dbReference>
<dbReference type="RefSeq" id="YP_001123232.1">
    <property type="nucleotide sequence ID" value="NC_009268.1"/>
</dbReference>
<dbReference type="SMR" id="A4QK51"/>
<dbReference type="GeneID" id="4962612"/>
<dbReference type="GO" id="GO:0009507">
    <property type="term" value="C:chloroplast"/>
    <property type="evidence" value="ECO:0007669"/>
    <property type="project" value="UniProtKB-SubCell"/>
</dbReference>
<dbReference type="GO" id="GO:1990904">
    <property type="term" value="C:ribonucleoprotein complex"/>
    <property type="evidence" value="ECO:0007669"/>
    <property type="project" value="UniProtKB-KW"/>
</dbReference>
<dbReference type="GO" id="GO:0005840">
    <property type="term" value="C:ribosome"/>
    <property type="evidence" value="ECO:0007669"/>
    <property type="project" value="UniProtKB-KW"/>
</dbReference>
<dbReference type="GO" id="GO:0019843">
    <property type="term" value="F:rRNA binding"/>
    <property type="evidence" value="ECO:0007669"/>
    <property type="project" value="UniProtKB-UniRule"/>
</dbReference>
<dbReference type="GO" id="GO:0003735">
    <property type="term" value="F:structural constituent of ribosome"/>
    <property type="evidence" value="ECO:0007669"/>
    <property type="project" value="InterPro"/>
</dbReference>
<dbReference type="GO" id="GO:0006412">
    <property type="term" value="P:translation"/>
    <property type="evidence" value="ECO:0007669"/>
    <property type="project" value="UniProtKB-UniRule"/>
</dbReference>
<dbReference type="FunFam" id="3.30.420.80:FF:000003">
    <property type="entry name" value="30S ribosomal protein S11, chloroplastic"/>
    <property type="match status" value="1"/>
</dbReference>
<dbReference type="Gene3D" id="3.30.420.80">
    <property type="entry name" value="Ribosomal protein S11"/>
    <property type="match status" value="1"/>
</dbReference>
<dbReference type="HAMAP" id="MF_01310">
    <property type="entry name" value="Ribosomal_uS11"/>
    <property type="match status" value="1"/>
</dbReference>
<dbReference type="InterPro" id="IPR001971">
    <property type="entry name" value="Ribosomal_uS11"/>
</dbReference>
<dbReference type="InterPro" id="IPR019981">
    <property type="entry name" value="Ribosomal_uS11_bac-type"/>
</dbReference>
<dbReference type="InterPro" id="IPR018102">
    <property type="entry name" value="Ribosomal_uS11_CS"/>
</dbReference>
<dbReference type="InterPro" id="IPR036967">
    <property type="entry name" value="Ribosomal_uS11_sf"/>
</dbReference>
<dbReference type="NCBIfam" id="NF003698">
    <property type="entry name" value="PRK05309.1"/>
    <property type="match status" value="1"/>
</dbReference>
<dbReference type="NCBIfam" id="TIGR03632">
    <property type="entry name" value="uS11_bact"/>
    <property type="match status" value="1"/>
</dbReference>
<dbReference type="PANTHER" id="PTHR11759">
    <property type="entry name" value="40S RIBOSOMAL PROTEIN S14/30S RIBOSOMAL PROTEIN S11"/>
    <property type="match status" value="1"/>
</dbReference>
<dbReference type="Pfam" id="PF00411">
    <property type="entry name" value="Ribosomal_S11"/>
    <property type="match status" value="1"/>
</dbReference>
<dbReference type="PIRSF" id="PIRSF002131">
    <property type="entry name" value="Ribosomal_S11"/>
    <property type="match status" value="1"/>
</dbReference>
<dbReference type="SUPFAM" id="SSF53137">
    <property type="entry name" value="Translational machinery components"/>
    <property type="match status" value="1"/>
</dbReference>
<dbReference type="PROSITE" id="PS00054">
    <property type="entry name" value="RIBOSOMAL_S11"/>
    <property type="match status" value="1"/>
</dbReference>
<organism>
    <name type="scientific">Arabis hirsuta</name>
    <name type="common">Hairy rock-cress</name>
    <name type="synonym">Turritis hirsuta</name>
    <dbReference type="NCBI Taxonomy" id="78191"/>
    <lineage>
        <taxon>Eukaryota</taxon>
        <taxon>Viridiplantae</taxon>
        <taxon>Streptophyta</taxon>
        <taxon>Embryophyta</taxon>
        <taxon>Tracheophyta</taxon>
        <taxon>Spermatophyta</taxon>
        <taxon>Magnoliopsida</taxon>
        <taxon>eudicotyledons</taxon>
        <taxon>Gunneridae</taxon>
        <taxon>Pentapetalae</taxon>
        <taxon>rosids</taxon>
        <taxon>malvids</taxon>
        <taxon>Brassicales</taxon>
        <taxon>Brassicaceae</taxon>
        <taxon>Arabideae</taxon>
        <taxon>Arabis</taxon>
    </lineage>
</organism>
<geneLocation type="chloroplast"/>
<proteinExistence type="inferred from homology"/>
<reference key="1">
    <citation type="submission" date="2007-03" db="EMBL/GenBank/DDBJ databases">
        <title>Sequencing analysis of Arabis hirsuta chloroplast DNA.</title>
        <authorList>
            <person name="Hosouchi T."/>
            <person name="Tsuruoka H."/>
            <person name="Kotani H."/>
        </authorList>
    </citation>
    <scope>NUCLEOTIDE SEQUENCE [LARGE SCALE GENOMIC DNA]</scope>
</reference>
<gene>
    <name evidence="1" type="primary">rps11</name>
</gene>
<keyword id="KW-0150">Chloroplast</keyword>
<keyword id="KW-0934">Plastid</keyword>
<keyword id="KW-0687">Ribonucleoprotein</keyword>
<keyword id="KW-0689">Ribosomal protein</keyword>
<keyword id="KW-0694">RNA-binding</keyword>
<keyword id="KW-0699">rRNA-binding</keyword>
<protein>
    <recommendedName>
        <fullName evidence="1">Small ribosomal subunit protein uS11c</fullName>
    </recommendedName>
    <alternativeName>
        <fullName evidence="3">30S ribosomal protein S11, chloroplastic</fullName>
    </alternativeName>
</protein>
<name>RR11_ARAHI</name>
<evidence type="ECO:0000255" key="1">
    <source>
        <dbReference type="HAMAP-Rule" id="MF_01310"/>
    </source>
</evidence>
<evidence type="ECO:0000256" key="2">
    <source>
        <dbReference type="SAM" id="MobiDB-lite"/>
    </source>
</evidence>
<evidence type="ECO:0000305" key="3"/>
<sequence>MAKPILRIGSRKNTRSGSRKNVRRIPKGIIHVQASFNNTIVTVTDVRGRVISWSSAGTCGFRGTRRGTPFAAQTAAGNAIRAVVDQGMQRAEVRIKGPGLGRDAALRAIRRSGILLSFVRDVTPMPHNGCRPPKKRRV</sequence>
<feature type="chain" id="PRO_0000294911" description="Small ribosomal subunit protein uS11c">
    <location>
        <begin position="1"/>
        <end position="138"/>
    </location>
</feature>
<feature type="region of interest" description="Disordered" evidence="2">
    <location>
        <begin position="1"/>
        <end position="22"/>
    </location>
</feature>
<feature type="compositionally biased region" description="Basic residues" evidence="2">
    <location>
        <begin position="9"/>
        <end position="22"/>
    </location>
</feature>
<comment type="subunit">
    <text evidence="1">Part of the 30S ribosomal subunit.</text>
</comment>
<comment type="subcellular location">
    <subcellularLocation>
        <location>Plastid</location>
        <location>Chloroplast</location>
    </subcellularLocation>
</comment>
<comment type="similarity">
    <text evidence="1">Belongs to the universal ribosomal protein uS11 family.</text>
</comment>
<accession>A4QK51</accession>